<dbReference type="EMBL" id="CP000557">
    <property type="protein sequence ID" value="ABO65511.1"/>
    <property type="molecule type" value="Genomic_DNA"/>
</dbReference>
<dbReference type="RefSeq" id="WP_008881926.1">
    <property type="nucleotide sequence ID" value="NC_009328.1"/>
</dbReference>
<dbReference type="SMR" id="A4IJK7"/>
<dbReference type="GeneID" id="87622307"/>
<dbReference type="KEGG" id="gtn:GTNG_0124"/>
<dbReference type="eggNOG" id="COG0200">
    <property type="taxonomic scope" value="Bacteria"/>
</dbReference>
<dbReference type="HOGENOM" id="CLU_055188_4_2_9"/>
<dbReference type="Proteomes" id="UP000001578">
    <property type="component" value="Chromosome"/>
</dbReference>
<dbReference type="GO" id="GO:0022625">
    <property type="term" value="C:cytosolic large ribosomal subunit"/>
    <property type="evidence" value="ECO:0007669"/>
    <property type="project" value="TreeGrafter"/>
</dbReference>
<dbReference type="GO" id="GO:0019843">
    <property type="term" value="F:rRNA binding"/>
    <property type="evidence" value="ECO:0007669"/>
    <property type="project" value="UniProtKB-UniRule"/>
</dbReference>
<dbReference type="GO" id="GO:0003735">
    <property type="term" value="F:structural constituent of ribosome"/>
    <property type="evidence" value="ECO:0007669"/>
    <property type="project" value="InterPro"/>
</dbReference>
<dbReference type="GO" id="GO:0006412">
    <property type="term" value="P:translation"/>
    <property type="evidence" value="ECO:0007669"/>
    <property type="project" value="UniProtKB-UniRule"/>
</dbReference>
<dbReference type="FunFam" id="3.100.10.10:FF:000004">
    <property type="entry name" value="50S ribosomal protein L15"/>
    <property type="match status" value="1"/>
</dbReference>
<dbReference type="Gene3D" id="3.100.10.10">
    <property type="match status" value="1"/>
</dbReference>
<dbReference type="HAMAP" id="MF_01341">
    <property type="entry name" value="Ribosomal_uL15"/>
    <property type="match status" value="1"/>
</dbReference>
<dbReference type="InterPro" id="IPR030878">
    <property type="entry name" value="Ribosomal_uL15"/>
</dbReference>
<dbReference type="InterPro" id="IPR021131">
    <property type="entry name" value="Ribosomal_uL15/eL18"/>
</dbReference>
<dbReference type="InterPro" id="IPR036227">
    <property type="entry name" value="Ribosomal_uL15/eL18_sf"/>
</dbReference>
<dbReference type="InterPro" id="IPR005749">
    <property type="entry name" value="Ribosomal_uL15_bac-type"/>
</dbReference>
<dbReference type="InterPro" id="IPR001196">
    <property type="entry name" value="Ribosomal_uL15_CS"/>
</dbReference>
<dbReference type="NCBIfam" id="TIGR01071">
    <property type="entry name" value="rplO_bact"/>
    <property type="match status" value="1"/>
</dbReference>
<dbReference type="PANTHER" id="PTHR12934">
    <property type="entry name" value="50S RIBOSOMAL PROTEIN L15"/>
    <property type="match status" value="1"/>
</dbReference>
<dbReference type="PANTHER" id="PTHR12934:SF11">
    <property type="entry name" value="LARGE RIBOSOMAL SUBUNIT PROTEIN UL15M"/>
    <property type="match status" value="1"/>
</dbReference>
<dbReference type="Pfam" id="PF00828">
    <property type="entry name" value="Ribosomal_L27A"/>
    <property type="match status" value="1"/>
</dbReference>
<dbReference type="SUPFAM" id="SSF52080">
    <property type="entry name" value="Ribosomal proteins L15p and L18e"/>
    <property type="match status" value="1"/>
</dbReference>
<dbReference type="PROSITE" id="PS00475">
    <property type="entry name" value="RIBOSOMAL_L15"/>
    <property type="match status" value="1"/>
</dbReference>
<name>RL15_GEOTN</name>
<protein>
    <recommendedName>
        <fullName evidence="1">Large ribosomal subunit protein uL15</fullName>
    </recommendedName>
    <alternativeName>
        <fullName evidence="3">50S ribosomal protein L15</fullName>
    </alternativeName>
</protein>
<evidence type="ECO:0000255" key="1">
    <source>
        <dbReference type="HAMAP-Rule" id="MF_01341"/>
    </source>
</evidence>
<evidence type="ECO:0000256" key="2">
    <source>
        <dbReference type="SAM" id="MobiDB-lite"/>
    </source>
</evidence>
<evidence type="ECO:0000305" key="3"/>
<accession>A4IJK7</accession>
<sequence length="146" mass="15611">MKLHELQPAPGSRKKAVRVGRGIGSGNGKTAGRGHKGQKARSGGGVRLGFEGGQTPLFRRLPKRGFTNINRKEYAVVNLDRLNIFEDGTEVTPELLLEKGVISKLKSGVKILGKGQIEKKLTVKAHKFSASAKEAIEAAGGKTEVI</sequence>
<reference key="1">
    <citation type="journal article" date="2007" name="Proc. Natl. Acad. Sci. U.S.A.">
        <title>Genome and proteome of long-chain alkane degrading Geobacillus thermodenitrificans NG80-2 isolated from a deep-subsurface oil reservoir.</title>
        <authorList>
            <person name="Feng L."/>
            <person name="Wang W."/>
            <person name="Cheng J."/>
            <person name="Ren Y."/>
            <person name="Zhao G."/>
            <person name="Gao C."/>
            <person name="Tang Y."/>
            <person name="Liu X."/>
            <person name="Han W."/>
            <person name="Peng X."/>
            <person name="Liu R."/>
            <person name="Wang L."/>
        </authorList>
    </citation>
    <scope>NUCLEOTIDE SEQUENCE [LARGE SCALE GENOMIC DNA]</scope>
    <source>
        <strain>NG80-2</strain>
    </source>
</reference>
<organism>
    <name type="scientific">Geobacillus thermodenitrificans (strain NG80-2)</name>
    <dbReference type="NCBI Taxonomy" id="420246"/>
    <lineage>
        <taxon>Bacteria</taxon>
        <taxon>Bacillati</taxon>
        <taxon>Bacillota</taxon>
        <taxon>Bacilli</taxon>
        <taxon>Bacillales</taxon>
        <taxon>Anoxybacillaceae</taxon>
        <taxon>Geobacillus</taxon>
    </lineage>
</organism>
<keyword id="KW-0687">Ribonucleoprotein</keyword>
<keyword id="KW-0689">Ribosomal protein</keyword>
<keyword id="KW-0694">RNA-binding</keyword>
<keyword id="KW-0699">rRNA-binding</keyword>
<comment type="function">
    <text evidence="1">Binds to the 23S rRNA.</text>
</comment>
<comment type="subunit">
    <text evidence="1">Part of the 50S ribosomal subunit.</text>
</comment>
<comment type="similarity">
    <text evidence="1">Belongs to the universal ribosomal protein uL15 family.</text>
</comment>
<gene>
    <name evidence="1" type="primary">rplO</name>
    <name type="ordered locus">GTNG_0124</name>
</gene>
<feature type="chain" id="PRO_1000054466" description="Large ribosomal subunit protein uL15">
    <location>
        <begin position="1"/>
        <end position="146"/>
    </location>
</feature>
<feature type="region of interest" description="Disordered" evidence="2">
    <location>
        <begin position="1"/>
        <end position="46"/>
    </location>
</feature>
<feature type="compositionally biased region" description="Gly residues" evidence="2">
    <location>
        <begin position="21"/>
        <end position="31"/>
    </location>
</feature>
<proteinExistence type="inferred from homology"/>